<evidence type="ECO:0000255" key="1">
    <source>
        <dbReference type="HAMAP-Rule" id="MF_03123"/>
    </source>
</evidence>
<evidence type="ECO:0000255" key="2">
    <source>
        <dbReference type="PROSITE-ProRule" id="PRU01266"/>
    </source>
</evidence>
<evidence type="ECO:0000256" key="3">
    <source>
        <dbReference type="SAM" id="MobiDB-lite"/>
    </source>
</evidence>
<organism>
    <name type="scientific">Plasmodium knowlesi (strain H)</name>
    <dbReference type="NCBI Taxonomy" id="5851"/>
    <lineage>
        <taxon>Eukaryota</taxon>
        <taxon>Sar</taxon>
        <taxon>Alveolata</taxon>
        <taxon>Apicomplexa</taxon>
        <taxon>Aconoidasida</taxon>
        <taxon>Haemosporida</taxon>
        <taxon>Plasmodiidae</taxon>
        <taxon>Plasmodium</taxon>
        <taxon>Plasmodium (Plasmodium)</taxon>
    </lineage>
</organism>
<feature type="signal peptide" evidence="1">
    <location>
        <begin position="1"/>
        <end position="23"/>
    </location>
</feature>
<feature type="chain" id="PRO_0000398231" description="Lipoyl synthase, apicoplast">
    <location>
        <begin position="24"/>
        <end position="442"/>
    </location>
</feature>
<feature type="domain" description="Radical SAM core" evidence="2">
    <location>
        <begin position="189"/>
        <end position="407"/>
    </location>
</feature>
<feature type="region of interest" description="Disordered" evidence="3">
    <location>
        <begin position="104"/>
        <end position="154"/>
    </location>
</feature>
<feature type="compositionally biased region" description="Basic and acidic residues" evidence="3">
    <location>
        <begin position="114"/>
        <end position="135"/>
    </location>
</feature>
<feature type="binding site" evidence="1">
    <location>
        <position position="177"/>
    </location>
    <ligand>
        <name>[4Fe-4S] cluster</name>
        <dbReference type="ChEBI" id="CHEBI:49883"/>
        <label>1</label>
    </ligand>
</feature>
<feature type="binding site" evidence="1">
    <location>
        <position position="182"/>
    </location>
    <ligand>
        <name>[4Fe-4S] cluster</name>
        <dbReference type="ChEBI" id="CHEBI:49883"/>
        <label>1</label>
    </ligand>
</feature>
<feature type="binding site" evidence="1">
    <location>
        <position position="188"/>
    </location>
    <ligand>
        <name>[4Fe-4S] cluster</name>
        <dbReference type="ChEBI" id="CHEBI:49883"/>
        <label>1</label>
    </ligand>
</feature>
<feature type="binding site" evidence="1">
    <location>
        <position position="203"/>
    </location>
    <ligand>
        <name>[4Fe-4S] cluster</name>
        <dbReference type="ChEBI" id="CHEBI:49883"/>
        <label>2</label>
        <note>4Fe-4S-S-AdoMet</note>
    </ligand>
</feature>
<feature type="binding site" evidence="1">
    <location>
        <position position="207"/>
    </location>
    <ligand>
        <name>[4Fe-4S] cluster</name>
        <dbReference type="ChEBI" id="CHEBI:49883"/>
        <label>2</label>
        <note>4Fe-4S-S-AdoMet</note>
    </ligand>
</feature>
<feature type="binding site" evidence="1">
    <location>
        <position position="210"/>
    </location>
    <ligand>
        <name>[4Fe-4S] cluster</name>
        <dbReference type="ChEBI" id="CHEBI:49883"/>
        <label>2</label>
        <note>4Fe-4S-S-AdoMet</note>
    </ligand>
</feature>
<feature type="binding site" evidence="1">
    <location>
        <position position="418"/>
    </location>
    <ligand>
        <name>[4Fe-4S] cluster</name>
        <dbReference type="ChEBI" id="CHEBI:49883"/>
        <label>1</label>
    </ligand>
</feature>
<reference key="1">
    <citation type="journal article" date="2008" name="Nature">
        <title>The genome of the simian and human malaria parasite Plasmodium knowlesi.</title>
        <authorList>
            <person name="Pain A."/>
            <person name="Boehme U."/>
            <person name="Berry A.E."/>
            <person name="Mungall K."/>
            <person name="Finn R.D."/>
            <person name="Jackson A.P."/>
            <person name="Mourier T."/>
            <person name="Mistry J."/>
            <person name="Pasini E.M."/>
            <person name="Aslett M.A."/>
            <person name="Balasubrammaniam S."/>
            <person name="Borgwardt K."/>
            <person name="Brooks K."/>
            <person name="Carret C."/>
            <person name="Carver T.J."/>
            <person name="Cherevach I."/>
            <person name="Chillingworth T."/>
            <person name="Clark T.G."/>
            <person name="Galinski M.R."/>
            <person name="Hall N."/>
            <person name="Harper D."/>
            <person name="Harris D."/>
            <person name="Hauser H."/>
            <person name="Ivens A."/>
            <person name="Janssen C.S."/>
            <person name="Keane T."/>
            <person name="Larke N."/>
            <person name="Lapp S."/>
            <person name="Marti M."/>
            <person name="Moule S."/>
            <person name="Meyer I.M."/>
            <person name="Ormond D."/>
            <person name="Peters N."/>
            <person name="Sanders M."/>
            <person name="Sanders S."/>
            <person name="Sargeant T.J."/>
            <person name="Simmonds M."/>
            <person name="Smith F."/>
            <person name="Squares R."/>
            <person name="Thurston S."/>
            <person name="Tivey A.R."/>
            <person name="Walker D."/>
            <person name="White B."/>
            <person name="Zuiderwijk E."/>
            <person name="Churcher C."/>
            <person name="Quail M.A."/>
            <person name="Cowman A.F."/>
            <person name="Turner C.M.R."/>
            <person name="Rajandream M.A."/>
            <person name="Kocken C.H.M."/>
            <person name="Thomas A.W."/>
            <person name="Newbold C.I."/>
            <person name="Barrell B.G."/>
            <person name="Berriman M."/>
        </authorList>
    </citation>
    <scope>NUCLEOTIDE SEQUENCE [LARGE SCALE GENOMIC DNA]</scope>
    <source>
        <strain>H</strain>
    </source>
</reference>
<name>LIPA_PLAKH</name>
<gene>
    <name evidence="1" type="primary">lipA</name>
    <name type="ORF">PKH_120980</name>
</gene>
<dbReference type="EC" id="2.8.1.8" evidence="1"/>
<dbReference type="EMBL" id="AM910994">
    <property type="protein sequence ID" value="CAQ41175.1"/>
    <property type="molecule type" value="Genomic_DNA"/>
</dbReference>
<dbReference type="RefSeq" id="XP_002259908.1">
    <property type="nucleotide sequence ID" value="XM_002259872.1"/>
</dbReference>
<dbReference type="SMR" id="B3L8F2"/>
<dbReference type="FunCoup" id="B3L8F2">
    <property type="interactions" value="303"/>
</dbReference>
<dbReference type="STRING" id="5851.B3L8F2"/>
<dbReference type="EnsemblProtists" id="CAQ41175">
    <property type="protein sequence ID" value="CAQ41175"/>
    <property type="gene ID" value="PKH_120980"/>
</dbReference>
<dbReference type="GeneID" id="7322246"/>
<dbReference type="KEGG" id="pkn:PKNH_1256700"/>
<dbReference type="VEuPathDB" id="PlasmoDB:PKNH_1256700"/>
<dbReference type="HOGENOM" id="CLU_033144_2_2_1"/>
<dbReference type="InParanoid" id="B3L8F2"/>
<dbReference type="OMA" id="RSCAFCQ"/>
<dbReference type="OrthoDB" id="3231at2759"/>
<dbReference type="PhylomeDB" id="B3L8F2"/>
<dbReference type="UniPathway" id="UPA00538">
    <property type="reaction ID" value="UER00593"/>
</dbReference>
<dbReference type="Proteomes" id="UP000031513">
    <property type="component" value="Chromosome 12"/>
</dbReference>
<dbReference type="GO" id="GO:0020011">
    <property type="term" value="C:apicoplast"/>
    <property type="evidence" value="ECO:0007669"/>
    <property type="project" value="UniProtKB-SubCell"/>
</dbReference>
<dbReference type="GO" id="GO:0005739">
    <property type="term" value="C:mitochondrion"/>
    <property type="evidence" value="ECO:0007669"/>
    <property type="project" value="TreeGrafter"/>
</dbReference>
<dbReference type="GO" id="GO:0051539">
    <property type="term" value="F:4 iron, 4 sulfur cluster binding"/>
    <property type="evidence" value="ECO:0007669"/>
    <property type="project" value="UniProtKB-UniRule"/>
</dbReference>
<dbReference type="GO" id="GO:0016992">
    <property type="term" value="F:lipoate synthase activity"/>
    <property type="evidence" value="ECO:0007669"/>
    <property type="project" value="UniProtKB-UniRule"/>
</dbReference>
<dbReference type="GO" id="GO:0046872">
    <property type="term" value="F:metal ion binding"/>
    <property type="evidence" value="ECO:0007669"/>
    <property type="project" value="UniProtKB-KW"/>
</dbReference>
<dbReference type="CDD" id="cd01335">
    <property type="entry name" value="Radical_SAM"/>
    <property type="match status" value="1"/>
</dbReference>
<dbReference type="Gene3D" id="3.20.20.70">
    <property type="entry name" value="Aldolase class I"/>
    <property type="match status" value="1"/>
</dbReference>
<dbReference type="HAMAP" id="MF_00206">
    <property type="entry name" value="Lipoyl_synth"/>
    <property type="match status" value="1"/>
</dbReference>
<dbReference type="InterPro" id="IPR013785">
    <property type="entry name" value="Aldolase_TIM"/>
</dbReference>
<dbReference type="InterPro" id="IPR006638">
    <property type="entry name" value="Elp3/MiaA/NifB-like_rSAM"/>
</dbReference>
<dbReference type="InterPro" id="IPR031691">
    <property type="entry name" value="LIAS_N"/>
</dbReference>
<dbReference type="InterPro" id="IPR003698">
    <property type="entry name" value="Lipoyl_synth"/>
</dbReference>
<dbReference type="InterPro" id="IPR007197">
    <property type="entry name" value="rSAM"/>
</dbReference>
<dbReference type="NCBIfam" id="TIGR00510">
    <property type="entry name" value="lipA"/>
    <property type="match status" value="1"/>
</dbReference>
<dbReference type="NCBIfam" id="NF004019">
    <property type="entry name" value="PRK05481.1"/>
    <property type="match status" value="1"/>
</dbReference>
<dbReference type="NCBIfam" id="NF009544">
    <property type="entry name" value="PRK12928.1"/>
    <property type="match status" value="1"/>
</dbReference>
<dbReference type="PANTHER" id="PTHR10949">
    <property type="entry name" value="LIPOYL SYNTHASE"/>
    <property type="match status" value="1"/>
</dbReference>
<dbReference type="PANTHER" id="PTHR10949:SF0">
    <property type="entry name" value="LIPOYL SYNTHASE, MITOCHONDRIAL"/>
    <property type="match status" value="1"/>
</dbReference>
<dbReference type="Pfam" id="PF16881">
    <property type="entry name" value="LIAS_N"/>
    <property type="match status" value="1"/>
</dbReference>
<dbReference type="Pfam" id="PF04055">
    <property type="entry name" value="Radical_SAM"/>
    <property type="match status" value="1"/>
</dbReference>
<dbReference type="SFLD" id="SFLDF00271">
    <property type="entry name" value="lipoyl_synthase"/>
    <property type="match status" value="1"/>
</dbReference>
<dbReference type="SFLD" id="SFLDS00029">
    <property type="entry name" value="Radical_SAM"/>
    <property type="match status" value="1"/>
</dbReference>
<dbReference type="SMART" id="SM00729">
    <property type="entry name" value="Elp3"/>
    <property type="match status" value="1"/>
</dbReference>
<dbReference type="SUPFAM" id="SSF102114">
    <property type="entry name" value="Radical SAM enzymes"/>
    <property type="match status" value="1"/>
</dbReference>
<dbReference type="PROSITE" id="PS51918">
    <property type="entry name" value="RADICAL_SAM"/>
    <property type="match status" value="1"/>
</dbReference>
<keyword id="KW-0004">4Fe-4S</keyword>
<keyword id="KW-0933">Apicoplast</keyword>
<keyword id="KW-0408">Iron</keyword>
<keyword id="KW-0411">Iron-sulfur</keyword>
<keyword id="KW-0479">Metal-binding</keyword>
<keyword id="KW-0934">Plastid</keyword>
<keyword id="KW-1185">Reference proteome</keyword>
<keyword id="KW-0949">S-adenosyl-L-methionine</keyword>
<keyword id="KW-0732">Signal</keyword>
<keyword id="KW-0808">Transferase</keyword>
<proteinExistence type="inferred from homology"/>
<comment type="function">
    <text evidence="1">Catalyzes the radical-mediated insertion of two sulfur atoms into the C-6 and C-8 positions of the octanoyl moiety bound to the lipoyl domains of lipoate-dependent enzymes, thereby converting the octanoylated domains into lipoylated derivatives.</text>
</comment>
<comment type="catalytic activity">
    <reaction evidence="1">
        <text>[[Fe-S] cluster scaffold protein carrying a second [4Fe-4S](2+) cluster] + N(6)-octanoyl-L-lysyl-[protein] + 2 oxidized [2Fe-2S]-[ferredoxin] + 2 S-adenosyl-L-methionine + 4 H(+) = [[Fe-S] cluster scaffold protein] + N(6)-[(R)-dihydrolipoyl]-L-lysyl-[protein] + 4 Fe(3+) + 2 hydrogen sulfide + 2 5'-deoxyadenosine + 2 L-methionine + 2 reduced [2Fe-2S]-[ferredoxin]</text>
        <dbReference type="Rhea" id="RHEA:16585"/>
        <dbReference type="Rhea" id="RHEA-COMP:9928"/>
        <dbReference type="Rhea" id="RHEA-COMP:10000"/>
        <dbReference type="Rhea" id="RHEA-COMP:10001"/>
        <dbReference type="Rhea" id="RHEA-COMP:10475"/>
        <dbReference type="Rhea" id="RHEA-COMP:14568"/>
        <dbReference type="Rhea" id="RHEA-COMP:14569"/>
        <dbReference type="ChEBI" id="CHEBI:15378"/>
        <dbReference type="ChEBI" id="CHEBI:17319"/>
        <dbReference type="ChEBI" id="CHEBI:29034"/>
        <dbReference type="ChEBI" id="CHEBI:29919"/>
        <dbReference type="ChEBI" id="CHEBI:33722"/>
        <dbReference type="ChEBI" id="CHEBI:33737"/>
        <dbReference type="ChEBI" id="CHEBI:33738"/>
        <dbReference type="ChEBI" id="CHEBI:57844"/>
        <dbReference type="ChEBI" id="CHEBI:59789"/>
        <dbReference type="ChEBI" id="CHEBI:78809"/>
        <dbReference type="ChEBI" id="CHEBI:83100"/>
        <dbReference type="EC" id="2.8.1.8"/>
    </reaction>
</comment>
<comment type="cofactor">
    <cofactor evidence="1">
        <name>[4Fe-4S] cluster</name>
        <dbReference type="ChEBI" id="CHEBI:49883"/>
    </cofactor>
    <text evidence="1">Binds 2 [4Fe-4S] clusters per subunit. One cluster is coordinated with 3 cysteines and an exchangeable S-adenosyl-L-methionine.</text>
</comment>
<comment type="pathway">
    <text evidence="1">Protein modification; protein lipoylation via endogenous pathway; protein N(6)-(lipoyl)lysine from octanoyl-[acyl-carrier-protein]: step 2/2.</text>
</comment>
<comment type="subcellular location">
    <subcellularLocation>
        <location evidence="1">Plastid</location>
        <location evidence="1">Apicoplast</location>
    </subcellularLocation>
</comment>
<comment type="similarity">
    <text evidence="1">Belongs to the radical SAM superfamily. Lipoyl synthase family.</text>
</comment>
<accession>B3L8F2</accession>
<protein>
    <recommendedName>
        <fullName evidence="1">Lipoyl synthase, apicoplast</fullName>
        <ecNumber evidence="1">2.8.1.8</ecNumber>
    </recommendedName>
    <alternativeName>
        <fullName evidence="1">Lipoate synthase</fullName>
        <shortName evidence="1">LS</shortName>
        <shortName evidence="1">Lip-syn</shortName>
    </alternativeName>
    <alternativeName>
        <fullName evidence="1">Lipoic acid synthase</fullName>
    </alternativeName>
</protein>
<sequence length="442" mass="50641">MRVLTPSLYIYAFFIFCVRFKCGNRTTVASAIRASYDMPPKELRVGDMLKKTSQPNCNYRTRGKCRKFFFVWKLDKMRDAHLGVQAKRRKNHLRSGSATYEASLGEHQLKGKRKESATNVEKEKKEKEQQEERLPVPKVGNKMPEKKPDWFHVPAPTGKKYNKLKEDLKKLKLHTVCEEAQCPNIGECWNIGTATIMLLGDTCTRGCKFCSIKTSSKPLAPDANEPFNTAKAICEWDINYVVLTSVDRDDLPDGGASHFAKTIELIKFSRPEILIECLVSDFQGNVDSIRKLANSGMEVYAHNIETVRRLQKFVRDRRANYEQSLRVLKIAKEINPMLYTKTSIMLGLGETKEEVLEAMSDVRQHNIDVITFGQYLRPTKNHLNVVEYVSPQMFDFYKEEGMKMGFKYIASGPLVRSSYKAGEYFMKSLVEQRRGAKTHAQG</sequence>